<name>LACB_TRIVU</name>
<keyword id="KW-1015">Disulfide bond</keyword>
<keyword id="KW-0494">Milk protein</keyword>
<keyword id="KW-0683">Retinol-binding</keyword>
<keyword id="KW-0964">Secreted</keyword>
<keyword id="KW-0732">Signal</keyword>
<keyword id="KW-0813">Transport</keyword>
<dbReference type="EMBL" id="U34289">
    <property type="protein sequence ID" value="AAA93180.1"/>
    <property type="molecule type" value="mRNA"/>
</dbReference>
<dbReference type="SMR" id="Q29146"/>
<dbReference type="GO" id="GO:0005576">
    <property type="term" value="C:extracellular region"/>
    <property type="evidence" value="ECO:0007669"/>
    <property type="project" value="UniProtKB-SubCell"/>
</dbReference>
<dbReference type="GO" id="GO:0019841">
    <property type="term" value="F:retinol binding"/>
    <property type="evidence" value="ECO:0007669"/>
    <property type="project" value="UniProtKB-KW"/>
</dbReference>
<dbReference type="Gene3D" id="2.40.128.20">
    <property type="match status" value="1"/>
</dbReference>
<dbReference type="InterPro" id="IPR012674">
    <property type="entry name" value="Calycin"/>
</dbReference>
<dbReference type="InterPro" id="IPR002345">
    <property type="entry name" value="Lipocalin"/>
</dbReference>
<dbReference type="InterPro" id="IPR000566">
    <property type="entry name" value="Lipocln_cytosolic_FA-bd_dom"/>
</dbReference>
<dbReference type="PANTHER" id="PTHR11430:SF117">
    <property type="entry name" value="GLYCODELIN"/>
    <property type="match status" value="1"/>
</dbReference>
<dbReference type="PANTHER" id="PTHR11430">
    <property type="entry name" value="LIPOCALIN"/>
    <property type="match status" value="1"/>
</dbReference>
<dbReference type="Pfam" id="PF00061">
    <property type="entry name" value="Lipocalin"/>
    <property type="match status" value="1"/>
</dbReference>
<dbReference type="SUPFAM" id="SSF50814">
    <property type="entry name" value="Lipocalins"/>
    <property type="match status" value="1"/>
</dbReference>
<feature type="signal peptide" evidence="1">
    <location>
        <begin position="1"/>
        <end position="18"/>
    </location>
</feature>
<feature type="chain" id="PRO_0000017911" description="Beta-lactoglobulin">
    <location>
        <begin position="19"/>
        <end position="174"/>
    </location>
</feature>
<feature type="disulfide bond" evidence="1">
    <location>
        <begin position="79"/>
        <end position="172"/>
    </location>
</feature>
<feature type="disulfide bond" evidence="1">
    <location>
        <begin position="122"/>
        <end position="134"/>
    </location>
</feature>
<proteinExistence type="evidence at transcript level"/>
<evidence type="ECO:0000250" key="1"/>
<evidence type="ECO:0000305" key="2"/>
<gene>
    <name type="primary">LGB</name>
</gene>
<accession>Q29146</accession>
<sequence>MKFLLLTVGLTSICAIQAIENIHSKEELVVEKLIGPWYRVEEAKAMEFSIPLFDMNIKEVNRTPEGNLELIVLEQTDSCVEKKFLLKKTEKPAEFEIYIPSESASYTLSVMETDYDNYILGCLENVNYREKMACAHYERRIEENKGMEEFKKIVRTLTIPYTMIEAQTREMCRV</sequence>
<reference key="1">
    <citation type="journal article" date="1998" name="J. Mol. Evol.">
        <title>Phylogenetic analysis of three lipocalin-like proteins present in the milk of Trichosurus vulpecula (Phalangeridae, Marsupialia).</title>
        <authorList>
            <person name="Piotte C.P."/>
            <person name="Hunter A.K."/>
            <person name="Marshall C.J."/>
            <person name="Grigor M.R."/>
        </authorList>
    </citation>
    <scope>NUCLEOTIDE SEQUENCE [MRNA]</scope>
    <source>
        <tissue>Mammary gland</tissue>
    </source>
</reference>
<organism>
    <name type="scientific">Trichosurus vulpecula</name>
    <name type="common">Brush-tailed possum</name>
    <dbReference type="NCBI Taxonomy" id="9337"/>
    <lineage>
        <taxon>Eukaryota</taxon>
        <taxon>Metazoa</taxon>
        <taxon>Chordata</taxon>
        <taxon>Craniata</taxon>
        <taxon>Vertebrata</taxon>
        <taxon>Euteleostomi</taxon>
        <taxon>Mammalia</taxon>
        <taxon>Metatheria</taxon>
        <taxon>Diprotodontia</taxon>
        <taxon>Phalangeridae</taxon>
        <taxon>Trichosurus</taxon>
    </lineage>
</organism>
<comment type="function">
    <text>Lactoglobulin is the primary component of whey, it binds retinol and is probably involved in the transport of that molecule.</text>
</comment>
<comment type="subunit">
    <text evidence="1">Monomer.</text>
</comment>
<comment type="subcellular location">
    <subcellularLocation>
        <location evidence="1">Secreted</location>
    </subcellularLocation>
</comment>
<comment type="similarity">
    <text evidence="2">Belongs to the calycin superfamily. Lipocalin family.</text>
</comment>
<protein>
    <recommendedName>
        <fullName>Beta-lactoglobulin</fullName>
        <shortName>Beta-LG</shortName>
    </recommendedName>
</protein>